<feature type="chain" id="PRO_1000074368" description="SsrA-binding protein">
    <location>
        <begin position="1"/>
        <end position="159"/>
    </location>
</feature>
<reference key="1">
    <citation type="journal article" date="2007" name="Proc. Natl. Acad. Sci. U.S.A.">
        <title>Genome sequencing reveals complex secondary metabolome in the marine actinomycete Salinispora tropica.</title>
        <authorList>
            <person name="Udwary D.W."/>
            <person name="Zeigler L."/>
            <person name="Asolkar R.N."/>
            <person name="Singan V."/>
            <person name="Lapidus A."/>
            <person name="Fenical W."/>
            <person name="Jensen P.R."/>
            <person name="Moore B.S."/>
        </authorList>
    </citation>
    <scope>NUCLEOTIDE SEQUENCE [LARGE SCALE GENOMIC DNA]</scope>
    <source>
        <strain>ATCC BAA-916 / DSM 44818 / JCM 13857 / NBRC 105044 / CNB-440</strain>
    </source>
</reference>
<sequence length="159" mass="17993">MPREKGRKVVASNRKARHDYSILDTYEAGMALTGTEVKSLRAGRASLVDAFAQERNGELYLHGMHIPEYVQGTWTNHEPRRTRKLLLNRIEIDRLIGKTRESGLTIVPLQVYFSDGWAKVEIGVAKGKKSYDKRQDLAKRDAQREIARAAGRRGKGMAD</sequence>
<organism>
    <name type="scientific">Salinispora tropica (strain ATCC BAA-916 / DSM 44818 / JCM 13857 / NBRC 105044 / CNB-440)</name>
    <dbReference type="NCBI Taxonomy" id="369723"/>
    <lineage>
        <taxon>Bacteria</taxon>
        <taxon>Bacillati</taxon>
        <taxon>Actinomycetota</taxon>
        <taxon>Actinomycetes</taxon>
        <taxon>Micromonosporales</taxon>
        <taxon>Micromonosporaceae</taxon>
        <taxon>Salinispora</taxon>
    </lineage>
</organism>
<comment type="function">
    <text evidence="1">Required for rescue of stalled ribosomes mediated by trans-translation. Binds to transfer-messenger RNA (tmRNA), required for stable association of tmRNA with ribosomes. tmRNA and SmpB together mimic tRNA shape, replacing the anticodon stem-loop with SmpB. tmRNA is encoded by the ssrA gene; the 2 termini fold to resemble tRNA(Ala) and it encodes a 'tag peptide', a short internal open reading frame. During trans-translation Ala-aminoacylated tmRNA acts like a tRNA, entering the A-site of stalled ribosomes, displacing the stalled mRNA. The ribosome then switches to translate the ORF on the tmRNA; the nascent peptide is terminated with the 'tag peptide' encoded by the tmRNA and targeted for degradation. The ribosome is freed to recommence translation, which seems to be the essential function of trans-translation.</text>
</comment>
<comment type="subcellular location">
    <subcellularLocation>
        <location evidence="1">Cytoplasm</location>
    </subcellularLocation>
    <text evidence="1">The tmRNA-SmpB complex associates with stalled 70S ribosomes.</text>
</comment>
<comment type="similarity">
    <text evidence="1">Belongs to the SmpB family.</text>
</comment>
<name>SSRP_SALTO</name>
<evidence type="ECO:0000255" key="1">
    <source>
        <dbReference type="HAMAP-Rule" id="MF_00023"/>
    </source>
</evidence>
<protein>
    <recommendedName>
        <fullName evidence="1">SsrA-binding protein</fullName>
    </recommendedName>
    <alternativeName>
        <fullName evidence="1">Small protein B</fullName>
    </alternativeName>
</protein>
<keyword id="KW-0963">Cytoplasm</keyword>
<keyword id="KW-1185">Reference proteome</keyword>
<keyword id="KW-0694">RNA-binding</keyword>
<gene>
    <name evidence="1" type="primary">smpB</name>
    <name type="ordered locus">Strop_0984</name>
</gene>
<proteinExistence type="inferred from homology"/>
<dbReference type="EMBL" id="CP000667">
    <property type="protein sequence ID" value="ABP53459.1"/>
    <property type="molecule type" value="Genomic_DNA"/>
</dbReference>
<dbReference type="RefSeq" id="WP_011904893.1">
    <property type="nucleotide sequence ID" value="NC_009380.1"/>
</dbReference>
<dbReference type="SMR" id="A4X3K9"/>
<dbReference type="STRING" id="369723.Strop_0984"/>
<dbReference type="KEGG" id="stp:Strop_0984"/>
<dbReference type="PATRIC" id="fig|369723.5.peg.1003"/>
<dbReference type="eggNOG" id="COG0691">
    <property type="taxonomic scope" value="Bacteria"/>
</dbReference>
<dbReference type="HOGENOM" id="CLU_108953_0_0_11"/>
<dbReference type="Proteomes" id="UP000000235">
    <property type="component" value="Chromosome"/>
</dbReference>
<dbReference type="GO" id="GO:0005829">
    <property type="term" value="C:cytosol"/>
    <property type="evidence" value="ECO:0007669"/>
    <property type="project" value="TreeGrafter"/>
</dbReference>
<dbReference type="GO" id="GO:0003723">
    <property type="term" value="F:RNA binding"/>
    <property type="evidence" value="ECO:0007669"/>
    <property type="project" value="UniProtKB-UniRule"/>
</dbReference>
<dbReference type="GO" id="GO:0070929">
    <property type="term" value="P:trans-translation"/>
    <property type="evidence" value="ECO:0007669"/>
    <property type="project" value="UniProtKB-UniRule"/>
</dbReference>
<dbReference type="CDD" id="cd09294">
    <property type="entry name" value="SmpB"/>
    <property type="match status" value="1"/>
</dbReference>
<dbReference type="Gene3D" id="2.40.280.10">
    <property type="match status" value="1"/>
</dbReference>
<dbReference type="HAMAP" id="MF_00023">
    <property type="entry name" value="SmpB"/>
    <property type="match status" value="1"/>
</dbReference>
<dbReference type="InterPro" id="IPR023620">
    <property type="entry name" value="SmpB"/>
</dbReference>
<dbReference type="InterPro" id="IPR000037">
    <property type="entry name" value="SsrA-bd_prot"/>
</dbReference>
<dbReference type="InterPro" id="IPR020081">
    <property type="entry name" value="SsrA-bd_prot_CS"/>
</dbReference>
<dbReference type="NCBIfam" id="NF003843">
    <property type="entry name" value="PRK05422.1"/>
    <property type="match status" value="1"/>
</dbReference>
<dbReference type="NCBIfam" id="TIGR00086">
    <property type="entry name" value="smpB"/>
    <property type="match status" value="1"/>
</dbReference>
<dbReference type="PANTHER" id="PTHR30308:SF2">
    <property type="entry name" value="SSRA-BINDING PROTEIN"/>
    <property type="match status" value="1"/>
</dbReference>
<dbReference type="PANTHER" id="PTHR30308">
    <property type="entry name" value="TMRNA-BINDING COMPONENT OF TRANS-TRANSLATION TAGGING COMPLEX"/>
    <property type="match status" value="1"/>
</dbReference>
<dbReference type="Pfam" id="PF01668">
    <property type="entry name" value="SmpB"/>
    <property type="match status" value="1"/>
</dbReference>
<dbReference type="SUPFAM" id="SSF74982">
    <property type="entry name" value="Small protein B (SmpB)"/>
    <property type="match status" value="1"/>
</dbReference>
<dbReference type="PROSITE" id="PS01317">
    <property type="entry name" value="SSRP"/>
    <property type="match status" value="1"/>
</dbReference>
<accession>A4X3K9</accession>